<comment type="function">
    <text evidence="5 7">This is one of the 2 subunits of the biotin-dependent propionyl-CoA carboxylase (PCC), the enzyme catalyzing the carboxylation of propionyl-CoA/propanoyl-CoA to D-methylmalonyl-CoA/(S)-methylmalonyl-CoA (PubMed:20725044). Within the holoenzyme, the alpha subunit catalyzes the ATP-dependent carboxylation of the biotin carried by the biotin carboxyl carrier (BCC) domain, while the beta subunit then tranfers the carboxyl group from carboxylated biotin to propionyl-CoA (Probable).</text>
</comment>
<comment type="catalytic activity">
    <reaction evidence="5">
        <text>propanoyl-CoA + hydrogencarbonate + ATP = (S)-methylmalonyl-CoA + ADP + phosphate + H(+)</text>
        <dbReference type="Rhea" id="RHEA:23720"/>
        <dbReference type="ChEBI" id="CHEBI:15378"/>
        <dbReference type="ChEBI" id="CHEBI:17544"/>
        <dbReference type="ChEBI" id="CHEBI:30616"/>
        <dbReference type="ChEBI" id="CHEBI:43474"/>
        <dbReference type="ChEBI" id="CHEBI:57327"/>
        <dbReference type="ChEBI" id="CHEBI:57392"/>
        <dbReference type="ChEBI" id="CHEBI:456216"/>
        <dbReference type="EC" id="6.4.1.3"/>
    </reaction>
    <physiologicalReaction direction="left-to-right" evidence="5">
        <dbReference type="Rhea" id="RHEA:23721"/>
    </physiologicalReaction>
</comment>
<comment type="pathway">
    <text evidence="7">Metabolic intermediate metabolism; propanoyl-CoA degradation; succinyl-CoA from propanoyl-CoA: step 1/3.</text>
</comment>
<comment type="subunit">
    <text evidence="5">The holoenzyme is a dodecamer composed of 6 PccA/alpha subunits and 6 PccB/beta subunits.</text>
</comment>
<comment type="interaction">
    <interactant intactId="EBI-9023183">
        <id>Q168G2</id>
    </interactant>
    <interactant intactId="EBI-9023176">
        <id>Q5LUF3</id>
        <label>pccA</label>
    </interactant>
    <organismsDiffer>true</organismsDiffer>
    <experiments>3</experiments>
</comment>
<comment type="domain">
    <text evidence="7">The beta subunit contains the carboxyl transferase (CT) domain.</text>
</comment>
<comment type="similarity">
    <text evidence="6">Belongs to the AccD/PCCB family.</text>
</comment>
<keyword id="KW-0002">3D-structure</keyword>
<keyword id="KW-0436">Ligase</keyword>
<keyword id="KW-1185">Reference proteome</keyword>
<protein>
    <recommendedName>
        <fullName evidence="7">Propionyl-CoA carboxylase beta chain</fullName>
        <ecNumber evidence="5">6.4.1.3</ecNumber>
    </recommendedName>
</protein>
<sequence length="510" mass="56100">MKDILEQLEDRRAAARLGGGQKRIDAQHGRGKLTARERVDLLLDEGSFEEFDMFVTHRCTDFNMQDQKPAGDGVVTGWGTINGRVVYVFSQDFTVLGGSVSETHSKKICKIMDMAMQNGAPVIGINDSGGARIQEGVDSLAGYGEVFQRNIMASGVVPQISMIMGPCAGGAVYSPAMTDFIFMVKDSSYMFVTGPDVVKTVTNEQVSAEELGGATTHTRKSSVADAAFENDVEALAEVRRLVDFLPLNNREKPPVRPFFDDPDRIEPSLDTLVPDNPNTPYDMKELIHKLADEGDFYEIQEEFAKNIITGFIRLEGRTVGVVANQPLVLAGCLDIDSSRKAARFVRFCDAFEIPLLTLIDVPGFLPGTSQEYGGVIKHGAKLLYAYGEATVPMVTVITRKAYGGAYVVMSSKHLRADFNYAWPTAEVAVMGAKGATEIIHRGDLGDPEKIAQHTADYEERFANPFVASERGFVDEVIQPRSTRKRVARAFASLRNKSVQMPWKKHDNIPL</sequence>
<dbReference type="EC" id="6.4.1.3" evidence="5"/>
<dbReference type="EMBL" id="CP000362">
    <property type="protein sequence ID" value="ABG31631.1"/>
    <property type="molecule type" value="Genomic_DNA"/>
</dbReference>
<dbReference type="RefSeq" id="WP_011568248.1">
    <property type="nucleotide sequence ID" value="NC_008209.1"/>
</dbReference>
<dbReference type="PDB" id="3N6R">
    <property type="method" value="X-ray"/>
    <property type="resolution" value="3.20 A"/>
    <property type="chains" value="B/D/F/H/J/L=1-510"/>
</dbReference>
<dbReference type="PDBsum" id="3N6R"/>
<dbReference type="SMR" id="Q168G2"/>
<dbReference type="DIP" id="DIP-59244N"/>
<dbReference type="IntAct" id="Q168G2">
    <property type="interactions" value="1"/>
</dbReference>
<dbReference type="STRING" id="375451.RD1_2028"/>
<dbReference type="KEGG" id="rde:RD1_2028"/>
<dbReference type="eggNOG" id="COG4799">
    <property type="taxonomic scope" value="Bacteria"/>
</dbReference>
<dbReference type="HOGENOM" id="CLU_018822_6_0_5"/>
<dbReference type="OrthoDB" id="9803706at2"/>
<dbReference type="UniPathway" id="UPA00945">
    <property type="reaction ID" value="UER00908"/>
</dbReference>
<dbReference type="EvolutionaryTrace" id="Q168G2"/>
<dbReference type="Proteomes" id="UP000007029">
    <property type="component" value="Chromosome"/>
</dbReference>
<dbReference type="GO" id="GO:0004658">
    <property type="term" value="F:propionyl-CoA carboxylase activity"/>
    <property type="evidence" value="ECO:0007669"/>
    <property type="project" value="UniProtKB-EC"/>
</dbReference>
<dbReference type="FunFam" id="3.90.226.10:FF:000017">
    <property type="entry name" value="Propionyl-CoA carboxylase subunit beta 5"/>
    <property type="match status" value="1"/>
</dbReference>
<dbReference type="FunFam" id="3.90.226.10:FF:000016">
    <property type="entry name" value="Propionyl-CoA carboxylase, beta subunit"/>
    <property type="match status" value="1"/>
</dbReference>
<dbReference type="Gene3D" id="3.90.226.10">
    <property type="entry name" value="2-enoyl-CoA Hydratase, Chain A, domain 1"/>
    <property type="match status" value="2"/>
</dbReference>
<dbReference type="InterPro" id="IPR051047">
    <property type="entry name" value="AccD/PCCB"/>
</dbReference>
<dbReference type="InterPro" id="IPR034733">
    <property type="entry name" value="AcCoA_carboxyl_beta"/>
</dbReference>
<dbReference type="InterPro" id="IPR029045">
    <property type="entry name" value="ClpP/crotonase-like_dom_sf"/>
</dbReference>
<dbReference type="InterPro" id="IPR011763">
    <property type="entry name" value="COA_CT_C"/>
</dbReference>
<dbReference type="InterPro" id="IPR011762">
    <property type="entry name" value="COA_CT_N"/>
</dbReference>
<dbReference type="PANTHER" id="PTHR43842">
    <property type="entry name" value="PROPIONYL-COA CARBOXYLASE BETA CHAIN"/>
    <property type="match status" value="1"/>
</dbReference>
<dbReference type="PANTHER" id="PTHR43842:SF2">
    <property type="entry name" value="PROPIONYL-COA CARBOXYLASE BETA CHAIN, MITOCHONDRIAL"/>
    <property type="match status" value="1"/>
</dbReference>
<dbReference type="Pfam" id="PF01039">
    <property type="entry name" value="Carboxyl_trans"/>
    <property type="match status" value="1"/>
</dbReference>
<dbReference type="SUPFAM" id="SSF52096">
    <property type="entry name" value="ClpP/crotonase"/>
    <property type="match status" value="2"/>
</dbReference>
<dbReference type="PROSITE" id="PS50989">
    <property type="entry name" value="COA_CT_CTER"/>
    <property type="match status" value="1"/>
</dbReference>
<dbReference type="PROSITE" id="PS50980">
    <property type="entry name" value="COA_CT_NTER"/>
    <property type="match status" value="1"/>
</dbReference>
<accession>Q168G2</accession>
<name>PCCB_ROSDO</name>
<reference key="1">
    <citation type="journal article" date="2007" name="J. Bacteriol.">
        <title>The complete genome sequence of Roseobacter denitrificans reveals a mixotrophic rather than photosynthetic metabolism.</title>
        <authorList>
            <person name="Swingley W.D."/>
            <person name="Sadekar S."/>
            <person name="Mastrian S.D."/>
            <person name="Matthies H.J."/>
            <person name="Hao J."/>
            <person name="Ramos H."/>
            <person name="Acharya C.R."/>
            <person name="Conrad A.L."/>
            <person name="Taylor H.L."/>
            <person name="Dejesa L.C."/>
            <person name="Shah M.K."/>
            <person name="O'Huallachain M.E."/>
            <person name="Lince M.T."/>
            <person name="Blankenship R.E."/>
            <person name="Beatty J.T."/>
            <person name="Touchman J.W."/>
        </authorList>
    </citation>
    <scope>NUCLEOTIDE SEQUENCE [LARGE SCALE GENOMIC DNA]</scope>
    <source>
        <strain>ATCC 33942 / OCh 114</strain>
    </source>
</reference>
<reference key="2">
    <citation type="journal article" date="2010" name="Nature">
        <title>Crystal structure of the alpha(6)beta(6) holoenzyme of propionyl-coenzyme A carboxylase.</title>
        <authorList>
            <person name="Huang C.S."/>
            <person name="Sadre-Bazzaz K."/>
            <person name="Shen Y."/>
            <person name="Deng B."/>
            <person name="Zhou Z.H."/>
            <person name="Tong L."/>
        </authorList>
    </citation>
    <scope>X-RAY CRYSTALLOGRAPHY (3.20 ANGSTROMS) IN COMPLEX WITH ALPHA SUBUNIT FROM RUEGERIA</scope>
    <scope>FUNCTION</scope>
    <scope>CATALYTIC ACTIVITY</scope>
    <scope>PATHWAY</scope>
    <scope>SUBUNIT</scope>
    <scope>DOMAIN</scope>
    <scope>MUTAGENESIS OF GLY-79 AND ALA-120</scope>
</reference>
<evidence type="ECO:0000255" key="1"/>
<evidence type="ECO:0000255" key="2">
    <source>
        <dbReference type="PROSITE-ProRule" id="PRU01136"/>
    </source>
</evidence>
<evidence type="ECO:0000255" key="3">
    <source>
        <dbReference type="PROSITE-ProRule" id="PRU01137"/>
    </source>
</evidence>
<evidence type="ECO:0000255" key="4">
    <source>
        <dbReference type="PROSITE-ProRule" id="PRU01138"/>
    </source>
</evidence>
<evidence type="ECO:0000269" key="5">
    <source>
    </source>
</evidence>
<evidence type="ECO:0000305" key="6"/>
<evidence type="ECO:0000305" key="7">
    <source>
    </source>
</evidence>
<evidence type="ECO:0000312" key="8">
    <source>
        <dbReference type="EMBL" id="ABG31631.1"/>
    </source>
</evidence>
<evidence type="ECO:0007829" key="9">
    <source>
        <dbReference type="PDB" id="3N6R"/>
    </source>
</evidence>
<feature type="chain" id="PRO_0000448577" description="Propionyl-CoA carboxylase beta chain">
    <location>
        <begin position="1"/>
        <end position="510"/>
    </location>
</feature>
<feature type="domain" description="CoA carboxyltransferase N-terminal" evidence="2">
    <location>
        <begin position="1"/>
        <end position="257"/>
    </location>
</feature>
<feature type="domain" description="CoA carboxyltransferase C-terminal" evidence="3">
    <location>
        <begin position="261"/>
        <end position="504"/>
    </location>
</feature>
<feature type="region of interest" description="Carboxyltransferase" evidence="4">
    <location>
        <begin position="1"/>
        <end position="504"/>
    </location>
</feature>
<feature type="region of interest" description="Acyl-CoA binding" evidence="1">
    <location>
        <begin position="292"/>
        <end position="325"/>
    </location>
</feature>
<feature type="mutagenesis site" description="Loss of solubility." evidence="5">
    <original>G</original>
    <variation>D</variation>
    <location>
        <position position="79"/>
    </location>
</feature>
<feature type="mutagenesis site" description="Loss of solubility." evidence="5">
    <original>A</original>
    <variation>P</variation>
    <location>
        <position position="120"/>
    </location>
</feature>
<feature type="helix" evidence="9">
    <location>
        <begin position="6"/>
        <end position="15"/>
    </location>
</feature>
<feature type="turn" evidence="9">
    <location>
        <begin position="16"/>
        <end position="19"/>
    </location>
</feature>
<feature type="helix" evidence="9">
    <location>
        <begin position="21"/>
        <end position="29"/>
    </location>
</feature>
<feature type="helix" evidence="9">
    <location>
        <begin position="35"/>
        <end position="42"/>
    </location>
</feature>
<feature type="strand" evidence="9">
    <location>
        <begin position="43"/>
        <end position="46"/>
    </location>
</feature>
<feature type="strand" evidence="9">
    <location>
        <begin position="49"/>
        <end position="51"/>
    </location>
</feature>
<feature type="helix" evidence="9">
    <location>
        <begin position="61"/>
        <end position="66"/>
    </location>
</feature>
<feature type="turn" evidence="9">
    <location>
        <begin position="70"/>
        <end position="73"/>
    </location>
</feature>
<feature type="strand" evidence="9">
    <location>
        <begin position="74"/>
        <end position="81"/>
    </location>
</feature>
<feature type="strand" evidence="9">
    <location>
        <begin position="84"/>
        <end position="91"/>
    </location>
</feature>
<feature type="helix" evidence="9">
    <location>
        <begin position="96"/>
        <end position="98"/>
    </location>
</feature>
<feature type="helix" evidence="9">
    <location>
        <begin position="102"/>
        <end position="118"/>
    </location>
</feature>
<feature type="strand" evidence="9">
    <location>
        <begin position="122"/>
        <end position="126"/>
    </location>
</feature>
<feature type="helix" evidence="9">
    <location>
        <begin position="133"/>
        <end position="136"/>
    </location>
</feature>
<feature type="helix" evidence="9">
    <location>
        <begin position="137"/>
        <end position="152"/>
    </location>
</feature>
<feature type="turn" evidence="9">
    <location>
        <begin position="153"/>
        <end position="156"/>
    </location>
</feature>
<feature type="strand" evidence="9">
    <location>
        <begin position="159"/>
        <end position="163"/>
    </location>
</feature>
<feature type="helix" evidence="9">
    <location>
        <begin position="169"/>
        <end position="172"/>
    </location>
</feature>
<feature type="helix" evidence="9">
    <location>
        <begin position="173"/>
        <end position="177"/>
    </location>
</feature>
<feature type="strand" evidence="9">
    <location>
        <begin position="178"/>
        <end position="184"/>
    </location>
</feature>
<feature type="turn" evidence="9">
    <location>
        <begin position="185"/>
        <end position="187"/>
    </location>
</feature>
<feature type="strand" evidence="9">
    <location>
        <begin position="191"/>
        <end position="193"/>
    </location>
</feature>
<feature type="helix" evidence="9">
    <location>
        <begin position="195"/>
        <end position="202"/>
    </location>
</feature>
<feature type="helix" evidence="9">
    <location>
        <begin position="208"/>
        <end position="212"/>
    </location>
</feature>
<feature type="helix" evidence="9">
    <location>
        <begin position="214"/>
        <end position="219"/>
    </location>
</feature>
<feature type="strand" evidence="9">
    <location>
        <begin position="225"/>
        <end position="230"/>
    </location>
</feature>
<feature type="helix" evidence="9">
    <location>
        <begin position="231"/>
        <end position="242"/>
    </location>
</feature>
<feature type="strand" evidence="9">
    <location>
        <begin position="247"/>
        <end position="251"/>
    </location>
</feature>
<feature type="helix" evidence="9">
    <location>
        <begin position="267"/>
        <end position="271"/>
    </location>
</feature>
<feature type="helix" evidence="9">
    <location>
        <begin position="283"/>
        <end position="290"/>
    </location>
</feature>
<feature type="strand" evidence="9">
    <location>
        <begin position="297"/>
        <end position="300"/>
    </location>
</feature>
<feature type="strand" evidence="9">
    <location>
        <begin position="307"/>
        <end position="314"/>
    </location>
</feature>
<feature type="strand" evidence="9">
    <location>
        <begin position="317"/>
        <end position="324"/>
    </location>
</feature>
<feature type="turn" evidence="9">
    <location>
        <begin position="326"/>
        <end position="328"/>
    </location>
</feature>
<feature type="helix" evidence="9">
    <location>
        <begin position="329"/>
        <end position="331"/>
    </location>
</feature>
<feature type="helix" evidence="9">
    <location>
        <begin position="335"/>
        <end position="350"/>
    </location>
</feature>
<feature type="strand" evidence="9">
    <location>
        <begin position="355"/>
        <end position="361"/>
    </location>
</feature>
<feature type="helix" evidence="9">
    <location>
        <begin position="368"/>
        <end position="372"/>
    </location>
</feature>
<feature type="helix" evidence="9">
    <location>
        <begin position="375"/>
        <end position="388"/>
    </location>
</feature>
<feature type="strand" evidence="9">
    <location>
        <begin position="393"/>
        <end position="402"/>
    </location>
</feature>
<feature type="helix" evidence="9">
    <location>
        <begin position="403"/>
        <end position="408"/>
    </location>
</feature>
<feature type="helix" evidence="9">
    <location>
        <begin position="412"/>
        <end position="414"/>
    </location>
</feature>
<feature type="strand" evidence="9">
    <location>
        <begin position="417"/>
        <end position="421"/>
    </location>
</feature>
<feature type="strand" evidence="9">
    <location>
        <begin position="426"/>
        <end position="430"/>
    </location>
</feature>
<feature type="helix" evidence="9">
    <location>
        <begin position="432"/>
        <end position="439"/>
    </location>
</feature>
<feature type="turn" evidence="9">
    <location>
        <begin position="442"/>
        <end position="445"/>
    </location>
</feature>
<feature type="helix" evidence="9">
    <location>
        <begin position="449"/>
        <end position="461"/>
    </location>
</feature>
<feature type="strand" evidence="9">
    <location>
        <begin position="462"/>
        <end position="464"/>
    </location>
</feature>
<feature type="helix" evidence="9">
    <location>
        <begin position="465"/>
        <end position="469"/>
    </location>
</feature>
<feature type="strand" evidence="9">
    <location>
        <begin position="472"/>
        <end position="476"/>
    </location>
</feature>
<feature type="helix" evidence="9">
    <location>
        <begin position="479"/>
        <end position="481"/>
    </location>
</feature>
<feature type="helix" evidence="9">
    <location>
        <begin position="482"/>
        <end position="491"/>
    </location>
</feature>
<feature type="turn" evidence="9">
    <location>
        <begin position="492"/>
        <end position="495"/>
    </location>
</feature>
<gene>
    <name evidence="8" type="primary">pccB</name>
    <name evidence="8" type="ordered locus">RD1_2028</name>
</gene>
<proteinExistence type="evidence at protein level"/>
<organism>
    <name type="scientific">Roseobacter denitrificans (strain ATCC 33942 / OCh 114)</name>
    <name type="common">Erythrobacter sp. (strain OCh 114)</name>
    <name type="synonym">Roseobacter denitrificans</name>
    <dbReference type="NCBI Taxonomy" id="375451"/>
    <lineage>
        <taxon>Bacteria</taxon>
        <taxon>Pseudomonadati</taxon>
        <taxon>Pseudomonadota</taxon>
        <taxon>Alphaproteobacteria</taxon>
        <taxon>Rhodobacterales</taxon>
        <taxon>Roseobacteraceae</taxon>
        <taxon>Roseobacter</taxon>
    </lineage>
</organism>